<sequence>MAQKPNFLKKLISAGLVTASTATIVASFAGSAMGAAIQQNRTTNAVATTVDGVGFDQTAVPANVAVPLNAVITAGVNKGITLNTPAGSFNGLFLNTANNLDVTVREDTTLGFITNVVNNANHFNLMLNAGKTLTITGQGITNVQAAATKNANNVVAQVNNGAAIDNNDLQGVGRIDCGAAASTLVFNLANPTTQKAPLILGDNAVIVNGANGTLNVTNGFIKVSSKSFATVNVINIGDGQGIMFNTDADNVNTLNLQANGATITFNGTDGTGRLVLLSKNAAATDFNVTGSLGGNLKGIIEFNTVAVNGQLKANAGANAAVIGTNNGAGRAAGFVVSVDNGKVATIDGQVYAKDMVIQSANAVGQVNFRHIVDVGTDGTTAFKTAASKVAITQNSNFGTTDFGNLAAQIIVPNTMTLNGNFTGDASNPGNTAGVITFDANGTLASASADANVAVTNNITAIEASGAGVVQLSGTHAAELRLGNAGSVFKLADGTVINGKVNQTALVGGALAAGTITLDGSATITGDIGNAGGAAALQGITLANDATKTLTLGGANIIGANGGTINFQANGGTIKLTSTQNNIVVDFDLAIATDQTGVVDASSLTNAQTLTINGKIGTVGANNKTLGQFNIGSSKTVLSDGDVAINELVIGNNGAVQFAHNTYLITRTTNAAGQGKIIFNPVVNNNTTLATGTNLGSATNPLAEINFGSKGAANVDTVLNVGKGVNLYATNITTTDANVGSFIFNAGGTNIVSGTVGGQQGNKFNTVALDNGTTVKFLGNATFNGNTTIAANSTLQIGGNYTADFVASADGTGIVEFVNTGPITVTLNKQAAPVNALKQITVSGPGNVVINEIGNAGNYHGAVTDTIAFENSSLGAVVFLPRGIPFNDAGNRIPLTIKSTVGNKTATGFDVPSVIVLGVDSVIADGQVIGDQNNIVGLGLGSDNDIIVNATTLYAGIGTINNNQGTVTLSGGIPNTPGTVYGLGTGIGASKFKQVTFTTDYNNLGNIIATNATINDGVTVTTGGIAGIGFDGKITLGSVNGNGNVRFVDGILSHSTSMIGTTKANNGTVTYLGNAFVGNIGDSDTPVASVRFTGSDGGAGLQGNIYSQVIDFGTYNLGISNSNVILGGGTTAINGKINLRTNTLTFASGTSTWGNNTSIETTLTLANGNIGNIVILEGAQVNATTTGTTTIKVQDNANANFSGTQTYTLIQGGARFNGTLGGPNFVVTGSNRFVNYGLIRAANQDYVITRTNNAENVVTNDIANSSFGGAPGVGQNVTTFVNATNTAAYNNLLLAKNSANSANFVGAIVTDTSAAITNAQLDVAKDIQAQLGNRLGALRYLGTPETAEMAGPEAGAIPAAVAAGDEAVDNVAYGIWAKPFYTDAHQSKKGGLAGYKAKTTGVVIGLDTLANDNLMIGAAIGITKTDIKHQDYKKGDKTDVNGFSFSLYGAQQLVKNFFAQGSAIFSLNQVKNKSQRYFFDANGNMSKQIAAGHYDNMTFGGNLTVGYDYNAMQGVLVTPMAGLSYLKSSDENYKETGTTVANKQVNSKFSDRTDLIVGAKVAGSTMNITDLAVYPEVHAFVVHKVTGRLSKTQSVLDGQVTPCISQPDRTAKTSYNLGLSASIRSDAKMEYGIGYDAQISSKYTAHQGTLKVRVNF</sequence>
<evidence type="ECO:0000250" key="1"/>
<evidence type="ECO:0000255" key="2"/>
<evidence type="ECO:0000255" key="3">
    <source>
        <dbReference type="PROSITE-ProRule" id="PRU00556"/>
    </source>
</evidence>
<evidence type="ECO:0000305" key="4"/>
<proteinExistence type="evidence at protein level"/>
<gene>
    <name type="primary">ompB</name>
    <name type="ordered locus">RC1085</name>
</gene>
<comment type="function">
    <text evidence="1">The 120 kDa surface-exposed protein is a major structural protein which may play a role as a rickettsial virulence factor and/or immunogen during infection.</text>
</comment>
<comment type="function">
    <text evidence="1">The 32 kDa beta peptide may serve as a membrane anchor (By similarity). It has been shown to adhere to biotinylated Vero cell proteins.</text>
</comment>
<comment type="subcellular location">
    <molecule>Outer membrane protein B</molecule>
    <subcellularLocation>
        <location evidence="1">Periplasm</location>
    </subcellularLocation>
</comment>
<comment type="subcellular location">
    <molecule>120 kDa surface-exposed protein</molecule>
    <subcellularLocation>
        <location evidence="1">Secreted</location>
    </subcellularLocation>
    <subcellularLocation>
        <location evidence="1">Cell surface</location>
    </subcellularLocation>
    <text evidence="1">Surface exposed. This bacterium is covered by a S-layer with hexagonal symmetry (By similarity).</text>
</comment>
<comment type="subcellular location">
    <molecule>32 kDa beta peptide</molecule>
    <subcellularLocation>
        <location evidence="4">Cell outer membrane</location>
        <topology evidence="4">Multi-pass membrane protein</topology>
    </subcellularLocation>
    <text>The cleaved C-terminal fragment (autotransporter domain) is localized in the outer membrane.</text>
</comment>
<comment type="similarity">
    <text evidence="4">Belongs to the rickettsiae OmpA/OmpB family.</text>
</comment>
<accession>Q9KKA3</accession>
<accession>Q9KK98</accession>
<accession>Q9XC45</accession>
<keyword id="KW-0998">Cell outer membrane</keyword>
<keyword id="KW-0472">Membrane</keyword>
<keyword id="KW-0574">Periplasm</keyword>
<keyword id="KW-0964">Secreted</keyword>
<keyword id="KW-0812">Transmembrane</keyword>
<keyword id="KW-1134">Transmembrane beta strand</keyword>
<keyword id="KW-0843">Virulence</keyword>
<protein>
    <recommendedName>
        <fullName>Outer membrane protein B</fullName>
    </recommendedName>
    <alternativeName>
        <fullName>168 kDa surface-layer protein</fullName>
    </alternativeName>
    <alternativeName>
        <fullName>Cell surface antigen 5</fullName>
        <shortName>Sca5</shortName>
    </alternativeName>
    <alternativeName>
        <fullName>Surface protein antigen</fullName>
    </alternativeName>
    <alternativeName>
        <fullName>rOmp B</fullName>
        <shortName>rOmpB</shortName>
    </alternativeName>
    <component>
        <recommendedName>
            <fullName>120 kDa surface-exposed protein</fullName>
        </recommendedName>
        <alternativeName>
            <fullName>120 kDa outer membrane protein OmpB</fullName>
        </alternativeName>
        <alternativeName>
            <fullName>Surface protein antigen</fullName>
        </alternativeName>
        <alternativeName>
            <fullName>p120</fullName>
        </alternativeName>
    </component>
    <component>
        <recommendedName>
            <fullName>32 kDa beta peptide</fullName>
        </recommendedName>
    </component>
</protein>
<dbReference type="EMBL" id="AE006914">
    <property type="protein sequence ID" value="AAL03623.1"/>
    <property type="molecule type" value="Genomic_DNA"/>
</dbReference>
<dbReference type="EMBL" id="AF123721">
    <property type="protein sequence ID" value="AAF34124.1"/>
    <property type="molecule type" value="Genomic_DNA"/>
</dbReference>
<dbReference type="EMBL" id="AF123726">
    <property type="protein sequence ID" value="AAF34129.1"/>
    <property type="molecule type" value="Genomic_DNA"/>
</dbReference>
<dbReference type="EMBL" id="AF149110">
    <property type="protein sequence ID" value="AAD39533.1"/>
    <property type="molecule type" value="Genomic_DNA"/>
</dbReference>
<dbReference type="PIR" id="E97835">
    <property type="entry name" value="E97835"/>
</dbReference>
<dbReference type="RefSeq" id="WP_010977663.1">
    <property type="nucleotide sequence ID" value="NC_003103.1"/>
</dbReference>
<dbReference type="SMR" id="Q9KKA3"/>
<dbReference type="GeneID" id="928230"/>
<dbReference type="KEGG" id="rco:RC1085"/>
<dbReference type="PATRIC" id="fig|272944.4.peg.1245"/>
<dbReference type="HOGENOM" id="CLU_000413_0_0_5"/>
<dbReference type="Proteomes" id="UP000000816">
    <property type="component" value="Chromosome"/>
</dbReference>
<dbReference type="GO" id="GO:0009279">
    <property type="term" value="C:cell outer membrane"/>
    <property type="evidence" value="ECO:0007669"/>
    <property type="project" value="UniProtKB-SubCell"/>
</dbReference>
<dbReference type="GO" id="GO:0009986">
    <property type="term" value="C:cell surface"/>
    <property type="evidence" value="ECO:0007669"/>
    <property type="project" value="UniProtKB-SubCell"/>
</dbReference>
<dbReference type="GO" id="GO:0005576">
    <property type="term" value="C:extracellular region"/>
    <property type="evidence" value="ECO:0007669"/>
    <property type="project" value="UniProtKB-SubCell"/>
</dbReference>
<dbReference type="GO" id="GO:0042597">
    <property type="term" value="C:periplasmic space"/>
    <property type="evidence" value="ECO:0007669"/>
    <property type="project" value="UniProtKB-SubCell"/>
</dbReference>
<dbReference type="Gene3D" id="2.40.128.130">
    <property type="entry name" value="Autotransporter beta-domain"/>
    <property type="match status" value="1"/>
</dbReference>
<dbReference type="InterPro" id="IPR005546">
    <property type="entry name" value="Autotransporte_beta"/>
</dbReference>
<dbReference type="InterPro" id="IPR036709">
    <property type="entry name" value="Autotransporte_beta_dom_sf"/>
</dbReference>
<dbReference type="InterPro" id="IPR006315">
    <property type="entry name" value="OM_autotransptr_brl_dom"/>
</dbReference>
<dbReference type="InterPro" id="IPR022095">
    <property type="entry name" value="OmpB_passenger_Rickettsia"/>
</dbReference>
<dbReference type="InterPro" id="IPR048195">
    <property type="entry name" value="OmpB_ricketsia"/>
</dbReference>
<dbReference type="NCBIfam" id="TIGR01414">
    <property type="entry name" value="autotrans_barl"/>
    <property type="match status" value="1"/>
</dbReference>
<dbReference type="NCBIfam" id="NF041657">
    <property type="entry name" value="ompB_ricketsia"/>
    <property type="match status" value="1"/>
</dbReference>
<dbReference type="Pfam" id="PF03797">
    <property type="entry name" value="Autotransporter"/>
    <property type="match status" value="1"/>
</dbReference>
<dbReference type="Pfam" id="PF12334">
    <property type="entry name" value="rOmpB_passenger"/>
    <property type="match status" value="1"/>
</dbReference>
<dbReference type="SMART" id="SM00869">
    <property type="entry name" value="Autotransporter"/>
    <property type="match status" value="1"/>
</dbReference>
<dbReference type="SUPFAM" id="SSF103515">
    <property type="entry name" value="Autotransporter"/>
    <property type="match status" value="1"/>
</dbReference>
<dbReference type="PROSITE" id="PS51208">
    <property type="entry name" value="AUTOTRANSPORTER"/>
    <property type="match status" value="1"/>
</dbReference>
<reference key="1">
    <citation type="journal article" date="2001" name="Science">
        <title>Mechanisms of evolution in Rickettsia conorii and R. prowazekii.</title>
        <authorList>
            <person name="Ogata H."/>
            <person name="Audic S."/>
            <person name="Renesto-Audiffren P."/>
            <person name="Fournier P.-E."/>
            <person name="Barbe V."/>
            <person name="Samson D."/>
            <person name="Roux V."/>
            <person name="Cossart P."/>
            <person name="Weissenbach J."/>
            <person name="Claverie J.-M."/>
            <person name="Raoult D."/>
        </authorList>
    </citation>
    <scope>NUCLEOTIDE SEQUENCE [LARGE SCALE GENOMIC DNA]</scope>
    <source>
        <strain>ATCC VR-613 / Malish 7</strain>
    </source>
</reference>
<reference key="2">
    <citation type="journal article" date="2000" name="Int. J. Syst. Evol. Microbiol.">
        <title>Phylogenetic analysis of members of the genus Rickettsia using the gene encoding the outer-membrane protein rOmpB (ompB).</title>
        <authorList>
            <person name="Roux V."/>
            <person name="Raoult D."/>
        </authorList>
    </citation>
    <scope>NUCLEOTIDE SEQUENCE [GENOMIC DNA] OF 33-1649</scope>
    <source>
        <strain>ATCC VR-613 / Malish 7</strain>
        <strain>Indian tick typhus</strain>
    </source>
</reference>
<reference key="3">
    <citation type="journal article" date="2000" name="Int. J. Syst. Evol. Microbiol.">
        <title>The rickettsial outer-membrane protein A and B genes of Rickettsia australis, the most divergent rickettsia of the spotted fever group.</title>
        <authorList>
            <person name="Stenos J."/>
            <person name="Walker D.H."/>
        </authorList>
    </citation>
    <scope>NUCLEOTIDE SEQUENCE [GENOMIC DNA] OF 353-1655</scope>
    <source>
        <strain>ATCC VR-613 / Malish 7</strain>
    </source>
</reference>
<reference key="4">
    <citation type="journal article" date="2006" name="Res. Microbiol.">
        <title>Identification of two putative rickettsial adhesins by proteomic analysis.</title>
        <authorList>
            <person name="Renesto P."/>
            <person name="Samson L."/>
            <person name="Ogata H."/>
            <person name="Azza S."/>
            <person name="Fourquet P."/>
            <person name="Gorvel J.-P."/>
            <person name="Heinzen R.A."/>
            <person name="Raoult D."/>
        </authorList>
    </citation>
    <scope>IDENTIFICATION BY MASS SPECTROMETRY</scope>
    <scope>ADHESION TO BIOTINYLATED EUKARYOTIC CELLS</scope>
    <source>
        <strain>ATCC VR-613 / Malish 7</strain>
    </source>
</reference>
<name>OMPB_RICCN</name>
<feature type="chain" id="PRO_0000387579" description="Outer membrane protein B">
    <location>
        <begin position="1"/>
        <end position="1655"/>
    </location>
</feature>
<feature type="chain" id="PRO_0000032648" description="120 kDa surface-exposed protein">
    <location>
        <begin position="1"/>
        <end position="1334"/>
    </location>
</feature>
<feature type="propeptide" id="PRO_0000032649" evidence="2">
    <location>
        <begin position="1335"/>
        <end position="1362"/>
    </location>
</feature>
<feature type="chain" id="PRO_0000032650" description="32 kDa beta peptide">
    <location>
        <begin position="1363"/>
        <end position="1655"/>
    </location>
</feature>
<feature type="domain" description="Autotransporter" evidence="3">
    <location>
        <begin position="1367"/>
        <end position="1655"/>
    </location>
</feature>
<feature type="sequence variant" description="In strain: Indian tick typhus.">
    <original>P</original>
    <variation>A</variation>
    <location>
        <position position="61"/>
    </location>
</feature>
<feature type="sequence variant" description="In strain: Indian tick typhus.">
    <original>G</original>
    <variation>S</variation>
    <location>
        <position position="75"/>
    </location>
</feature>
<feature type="sequence variant" description="In strain: Indian tick typhus.">
    <original>K</original>
    <variation>N</variation>
    <location>
        <position position="78"/>
    </location>
</feature>
<feature type="sequence variant" description="In strain: Indian tick typhus.">
    <original>V</original>
    <variation>A</variation>
    <location>
        <position position="251"/>
    </location>
</feature>
<feature type="sequence variant" description="In strain: Indian tick typhus.">
    <original>N</original>
    <variation>D</variation>
    <location>
        <position position="413"/>
    </location>
</feature>
<feature type="sequence variant" description="In strain: Indian tick typhus.">
    <original>I</original>
    <variation>V</variation>
    <location>
        <position position="959"/>
    </location>
</feature>
<feature type="sequence variant" description="In strain: Indian tick typhus.">
    <original>A</original>
    <variation>T</variation>
    <location>
        <position position="988"/>
    </location>
</feature>
<feature type="sequence variant" description="In strain: Indian tick typhus.">
    <original>R</original>
    <variation>L</variation>
    <location>
        <position position="1139"/>
    </location>
</feature>
<feature type="sequence conflict" description="In Ref. 3; AAD39533." evidence="4" ref="3">
    <original>KD</original>
    <variation>GH</variation>
    <location>
        <begin position="353"/>
        <end position="354"/>
    </location>
</feature>
<feature type="sequence conflict" description="In Ref. 3; AAD39533." evidence="4" ref="3">
    <original>F</original>
    <variation>S</variation>
    <location>
        <position position="776"/>
    </location>
</feature>
<feature type="sequence conflict" description="In Ref. 3; AAD39533." evidence="4" ref="3">
    <original>E</original>
    <variation>D</variation>
    <location>
        <position position="1159"/>
    </location>
</feature>
<feature type="sequence conflict" description="In Ref. 3; AAD39533." evidence="4" ref="3">
    <original>G</original>
    <variation>S</variation>
    <location>
        <position position="1177"/>
    </location>
</feature>
<feature type="sequence conflict" description="In Ref. 3; AAD39533." evidence="4" ref="3">
    <original>H</original>
    <variation>R</variation>
    <location>
        <position position="1492"/>
    </location>
</feature>
<organism>
    <name type="scientific">Rickettsia conorii (strain ATCC VR-613 / Malish 7)</name>
    <dbReference type="NCBI Taxonomy" id="272944"/>
    <lineage>
        <taxon>Bacteria</taxon>
        <taxon>Pseudomonadati</taxon>
        <taxon>Pseudomonadota</taxon>
        <taxon>Alphaproteobacteria</taxon>
        <taxon>Rickettsiales</taxon>
        <taxon>Rickettsiaceae</taxon>
        <taxon>Rickettsieae</taxon>
        <taxon>Rickettsia</taxon>
        <taxon>spotted fever group</taxon>
    </lineage>
</organism>